<feature type="chain" id="PRO_0000382535" description="UPF0397 protein LACR_0367">
    <location>
        <begin position="1"/>
        <end position="188"/>
    </location>
</feature>
<feature type="transmembrane region" description="Helical" evidence="1">
    <location>
        <begin position="14"/>
        <end position="34"/>
    </location>
</feature>
<feature type="transmembrane region" description="Helical" evidence="1">
    <location>
        <begin position="48"/>
        <end position="68"/>
    </location>
</feature>
<feature type="transmembrane region" description="Helical" evidence="1">
    <location>
        <begin position="80"/>
        <end position="100"/>
    </location>
</feature>
<feature type="transmembrane region" description="Helical" evidence="1">
    <location>
        <begin position="120"/>
        <end position="140"/>
    </location>
</feature>
<feature type="transmembrane region" description="Helical" evidence="1">
    <location>
        <begin position="152"/>
        <end position="172"/>
    </location>
</feature>
<organism>
    <name type="scientific">Lactococcus lactis subsp. cremoris (strain SK11)</name>
    <dbReference type="NCBI Taxonomy" id="272622"/>
    <lineage>
        <taxon>Bacteria</taxon>
        <taxon>Bacillati</taxon>
        <taxon>Bacillota</taxon>
        <taxon>Bacilli</taxon>
        <taxon>Lactobacillales</taxon>
        <taxon>Streptococcaceae</taxon>
        <taxon>Lactococcus</taxon>
        <taxon>Lactococcus cremoris subsp. cremoris</taxon>
    </lineage>
</organism>
<comment type="subcellular location">
    <subcellularLocation>
        <location evidence="1">Cell membrane</location>
        <topology evidence="1">Multi-pass membrane protein</topology>
    </subcellularLocation>
</comment>
<comment type="similarity">
    <text evidence="1">Belongs to the UPF0397 family.</text>
</comment>
<protein>
    <recommendedName>
        <fullName evidence="1">UPF0397 protein LACR_0367</fullName>
    </recommendedName>
</protein>
<dbReference type="EMBL" id="CP000425">
    <property type="protein sequence ID" value="ABJ71974.1"/>
    <property type="molecule type" value="Genomic_DNA"/>
</dbReference>
<dbReference type="KEGG" id="llc:LACR_0367"/>
<dbReference type="HOGENOM" id="CLU_120023_0_0_9"/>
<dbReference type="Proteomes" id="UP000000240">
    <property type="component" value="Chromosome"/>
</dbReference>
<dbReference type="GO" id="GO:0005886">
    <property type="term" value="C:plasma membrane"/>
    <property type="evidence" value="ECO:0007669"/>
    <property type="project" value="UniProtKB-SubCell"/>
</dbReference>
<dbReference type="Gene3D" id="1.10.1760.20">
    <property type="match status" value="1"/>
</dbReference>
<dbReference type="HAMAP" id="MF_01572">
    <property type="entry name" value="UPF0397"/>
    <property type="match status" value="1"/>
</dbReference>
<dbReference type="InterPro" id="IPR009825">
    <property type="entry name" value="ECF_substrate-spec-like"/>
</dbReference>
<dbReference type="InterPro" id="IPR022914">
    <property type="entry name" value="UPF0397"/>
</dbReference>
<dbReference type="NCBIfam" id="NF010182">
    <property type="entry name" value="PRK13661.1"/>
    <property type="match status" value="1"/>
</dbReference>
<dbReference type="PANTHER" id="PTHR37815">
    <property type="entry name" value="UPF0397 PROTEIN BC_2624-RELATED"/>
    <property type="match status" value="1"/>
</dbReference>
<dbReference type="PANTHER" id="PTHR37815:SF3">
    <property type="entry name" value="UPF0397 PROTEIN SPR0429"/>
    <property type="match status" value="1"/>
</dbReference>
<dbReference type="Pfam" id="PF07155">
    <property type="entry name" value="ECF-ribofla_trS"/>
    <property type="match status" value="1"/>
</dbReference>
<gene>
    <name type="ordered locus">LACR_0367</name>
</gene>
<evidence type="ECO:0000255" key="1">
    <source>
        <dbReference type="HAMAP-Rule" id="MF_01572"/>
    </source>
</evidence>
<accession>Q031Z8</accession>
<name>Y367_LACLS</name>
<reference key="1">
    <citation type="journal article" date="2006" name="Proc. Natl. Acad. Sci. U.S.A.">
        <title>Comparative genomics of the lactic acid bacteria.</title>
        <authorList>
            <person name="Makarova K.S."/>
            <person name="Slesarev A."/>
            <person name="Wolf Y.I."/>
            <person name="Sorokin A."/>
            <person name="Mirkin B."/>
            <person name="Koonin E.V."/>
            <person name="Pavlov A."/>
            <person name="Pavlova N."/>
            <person name="Karamychev V."/>
            <person name="Polouchine N."/>
            <person name="Shakhova V."/>
            <person name="Grigoriev I."/>
            <person name="Lou Y."/>
            <person name="Rohksar D."/>
            <person name="Lucas S."/>
            <person name="Huang K."/>
            <person name="Goodstein D.M."/>
            <person name="Hawkins T."/>
            <person name="Plengvidhya V."/>
            <person name="Welker D."/>
            <person name="Hughes J."/>
            <person name="Goh Y."/>
            <person name="Benson A."/>
            <person name="Baldwin K."/>
            <person name="Lee J.-H."/>
            <person name="Diaz-Muniz I."/>
            <person name="Dosti B."/>
            <person name="Smeianov V."/>
            <person name="Wechter W."/>
            <person name="Barabote R."/>
            <person name="Lorca G."/>
            <person name="Altermann E."/>
            <person name="Barrangou R."/>
            <person name="Ganesan B."/>
            <person name="Xie Y."/>
            <person name="Rawsthorne H."/>
            <person name="Tamir D."/>
            <person name="Parker C."/>
            <person name="Breidt F."/>
            <person name="Broadbent J.R."/>
            <person name="Hutkins R."/>
            <person name="O'Sullivan D."/>
            <person name="Steele J."/>
            <person name="Unlu G."/>
            <person name="Saier M.H. Jr."/>
            <person name="Klaenhammer T."/>
            <person name="Richardson P."/>
            <person name="Kozyavkin S."/>
            <person name="Weimer B.C."/>
            <person name="Mills D.A."/>
        </authorList>
    </citation>
    <scope>NUCLEOTIDE SEQUENCE [LARGE SCALE GENOMIC DNA]</scope>
    <source>
        <strain>SK11</strain>
    </source>
</reference>
<sequence length="188" mass="20078">MIKGETIKNNSVKIVVATGIGAALFVIIGWLINIPTPIPNTSIQLQYAVLALFSALFGPLAGFLIGFIGHALKDSFLYGAPWWTWVLGSGLMGLFLGFGVKRESLTQGIFGNKEIIRFNIVQFLANVVVWGLIAPIGDILVYSEPANKVFTQGVVAGLVNALTIAVAGTLLLKLYAATRTKSGTLDKE</sequence>
<proteinExistence type="inferred from homology"/>
<keyword id="KW-1003">Cell membrane</keyword>
<keyword id="KW-0472">Membrane</keyword>
<keyword id="KW-0812">Transmembrane</keyword>
<keyword id="KW-1133">Transmembrane helix</keyword>